<dbReference type="EC" id="1.13.11.92" evidence="2"/>
<dbReference type="EMBL" id="AF334402">
    <property type="protein sequence ID" value="AAL87742.1"/>
    <property type="molecule type" value="Genomic_DNA"/>
</dbReference>
<dbReference type="EMBL" id="AC010870">
    <property type="protein sequence ID" value="AAF24612.1"/>
    <property type="molecule type" value="Genomic_DNA"/>
</dbReference>
<dbReference type="EMBL" id="CP002686">
    <property type="protein sequence ID" value="AEE73664.1"/>
    <property type="molecule type" value="Genomic_DNA"/>
</dbReference>
<dbReference type="EMBL" id="AY042787">
    <property type="protein sequence ID" value="AAK68727.1"/>
    <property type="molecule type" value="mRNA"/>
</dbReference>
<dbReference type="EMBL" id="AY064666">
    <property type="protein sequence ID" value="AAL47373.1"/>
    <property type="molecule type" value="mRNA"/>
</dbReference>
<dbReference type="RefSeq" id="NP_186791.1">
    <property type="nucleotide sequence ID" value="NM_111008.3"/>
</dbReference>
<dbReference type="PDB" id="4HHR">
    <property type="method" value="X-ray"/>
    <property type="resolution" value="1.51 A"/>
    <property type="chains" value="A=1-639"/>
</dbReference>
<dbReference type="PDB" id="4HHS">
    <property type="method" value="X-ray"/>
    <property type="resolution" value="1.70 A"/>
    <property type="chains" value="A=1-639"/>
</dbReference>
<dbReference type="PDBsum" id="4HHR"/>
<dbReference type="PDBsum" id="4HHS"/>
<dbReference type="SMR" id="Q9SGH6"/>
<dbReference type="BioGRID" id="6468">
    <property type="interactions" value="2"/>
</dbReference>
<dbReference type="FunCoup" id="Q9SGH6">
    <property type="interactions" value="49"/>
</dbReference>
<dbReference type="STRING" id="3702.Q9SGH6"/>
<dbReference type="PeroxiBase" id="3377">
    <property type="entry name" value="AtDiOx01"/>
</dbReference>
<dbReference type="iPTMnet" id="Q9SGH6"/>
<dbReference type="PaxDb" id="3702-AT3G01420.1"/>
<dbReference type="ProteomicsDB" id="222140"/>
<dbReference type="EnsemblPlants" id="AT3G01420.1">
    <property type="protein sequence ID" value="AT3G01420.1"/>
    <property type="gene ID" value="AT3G01420"/>
</dbReference>
<dbReference type="GeneID" id="821135"/>
<dbReference type="Gramene" id="AT3G01420.1">
    <property type="protein sequence ID" value="AT3G01420.1"/>
    <property type="gene ID" value="AT3G01420"/>
</dbReference>
<dbReference type="KEGG" id="ath:AT3G01420"/>
<dbReference type="Araport" id="AT3G01420"/>
<dbReference type="TAIR" id="AT3G01420">
    <property type="gene designation" value="DOX1"/>
</dbReference>
<dbReference type="eggNOG" id="KOG2408">
    <property type="taxonomic scope" value="Eukaryota"/>
</dbReference>
<dbReference type="HOGENOM" id="CLU_033051_0_0_1"/>
<dbReference type="InParanoid" id="Q9SGH6"/>
<dbReference type="OMA" id="AFAPWTK"/>
<dbReference type="PhylomeDB" id="Q9SGH6"/>
<dbReference type="BioCyc" id="ARA:AT3G01420-MONOMER"/>
<dbReference type="BioCyc" id="MetaCyc:AT3G01420-MONOMER"/>
<dbReference type="BRENDA" id="1.13.11.92">
    <property type="organism ID" value="399"/>
</dbReference>
<dbReference type="EvolutionaryTrace" id="Q9SGH6"/>
<dbReference type="PRO" id="PR:Q9SGH6"/>
<dbReference type="Proteomes" id="UP000006548">
    <property type="component" value="Chromosome 3"/>
</dbReference>
<dbReference type="ExpressionAtlas" id="Q9SGH6">
    <property type="expression patterns" value="baseline and differential"/>
</dbReference>
<dbReference type="GO" id="GO:0012511">
    <property type="term" value="C:monolayer-surrounded lipid storage body"/>
    <property type="evidence" value="ECO:0000314"/>
    <property type="project" value="TAIR"/>
</dbReference>
<dbReference type="GO" id="GO:0102672">
    <property type="term" value="F:fatty acid alpha-dioxygenase activity"/>
    <property type="evidence" value="ECO:0007669"/>
    <property type="project" value="RHEA"/>
</dbReference>
<dbReference type="GO" id="GO:0020037">
    <property type="term" value="F:heme binding"/>
    <property type="evidence" value="ECO:0007669"/>
    <property type="project" value="InterPro"/>
</dbReference>
<dbReference type="GO" id="GO:0046872">
    <property type="term" value="F:metal ion binding"/>
    <property type="evidence" value="ECO:0007669"/>
    <property type="project" value="UniProtKB-KW"/>
</dbReference>
<dbReference type="GO" id="GO:0016702">
    <property type="term" value="F:oxidoreductase activity, acting on single donors with incorporation of molecular oxygen, incorporation of two atoms of oxygen"/>
    <property type="evidence" value="ECO:0000314"/>
    <property type="project" value="TAIR"/>
</dbReference>
<dbReference type="GO" id="GO:0004601">
    <property type="term" value="F:peroxidase activity"/>
    <property type="evidence" value="ECO:0007669"/>
    <property type="project" value="UniProtKB-KW"/>
</dbReference>
<dbReference type="GO" id="GO:1902609">
    <property type="term" value="P:(R)-2-hydroxy-alpha-linolenic acid biosynthetic process"/>
    <property type="evidence" value="ECO:0000315"/>
    <property type="project" value="TAIR"/>
</dbReference>
<dbReference type="GO" id="GO:0008219">
    <property type="term" value="P:cell death"/>
    <property type="evidence" value="ECO:0000270"/>
    <property type="project" value="TAIR"/>
</dbReference>
<dbReference type="GO" id="GO:0071732">
    <property type="term" value="P:cellular response to nitric oxide"/>
    <property type="evidence" value="ECO:0000270"/>
    <property type="project" value="UniProtKB"/>
</dbReference>
<dbReference type="GO" id="GO:0034614">
    <property type="term" value="P:cellular response to reactive oxygen species"/>
    <property type="evidence" value="ECO:0000270"/>
    <property type="project" value="UniProtKB"/>
</dbReference>
<dbReference type="GO" id="GO:0071446">
    <property type="term" value="P:cellular response to salicylic acid stimulus"/>
    <property type="evidence" value="ECO:0000270"/>
    <property type="project" value="UniProtKB"/>
</dbReference>
<dbReference type="GO" id="GO:0042742">
    <property type="term" value="P:defense response to bacterium"/>
    <property type="evidence" value="ECO:0000270"/>
    <property type="project" value="UniProtKB"/>
</dbReference>
<dbReference type="GO" id="GO:0050832">
    <property type="term" value="P:defense response to fungus"/>
    <property type="evidence" value="ECO:0000314"/>
    <property type="project" value="TAIR"/>
</dbReference>
<dbReference type="GO" id="GO:0001561">
    <property type="term" value="P:fatty acid alpha-oxidation"/>
    <property type="evidence" value="ECO:0000314"/>
    <property type="project" value="TAIR"/>
</dbReference>
<dbReference type="GO" id="GO:0006629">
    <property type="term" value="P:lipid metabolic process"/>
    <property type="evidence" value="ECO:0000304"/>
    <property type="project" value="TAIR"/>
</dbReference>
<dbReference type="GO" id="GO:0031408">
    <property type="term" value="P:oxylipin biosynthetic process"/>
    <property type="evidence" value="ECO:0007669"/>
    <property type="project" value="UniProtKB-KW"/>
</dbReference>
<dbReference type="GO" id="GO:0009626">
    <property type="term" value="P:plant-type hypersensitive response"/>
    <property type="evidence" value="ECO:0007669"/>
    <property type="project" value="UniProtKB-KW"/>
</dbReference>
<dbReference type="GO" id="GO:0009737">
    <property type="term" value="P:response to abscisic acid"/>
    <property type="evidence" value="ECO:0000315"/>
    <property type="project" value="UniProtKB"/>
</dbReference>
<dbReference type="GO" id="GO:0006979">
    <property type="term" value="P:response to oxidative stress"/>
    <property type="evidence" value="ECO:0000315"/>
    <property type="project" value="TAIR"/>
</dbReference>
<dbReference type="GO" id="GO:0009751">
    <property type="term" value="P:response to salicylic acid"/>
    <property type="evidence" value="ECO:0000270"/>
    <property type="project" value="TAIR"/>
</dbReference>
<dbReference type="GO" id="GO:0009627">
    <property type="term" value="P:systemic acquired resistance"/>
    <property type="evidence" value="ECO:0000315"/>
    <property type="project" value="UniProtKB"/>
</dbReference>
<dbReference type="CDD" id="cd09818">
    <property type="entry name" value="PIOX_like"/>
    <property type="match status" value="1"/>
</dbReference>
<dbReference type="FunFam" id="1.10.640.10:FF:000011">
    <property type="entry name" value="Alpha-dioxygenase 1"/>
    <property type="match status" value="1"/>
</dbReference>
<dbReference type="Gene3D" id="1.10.640.10">
    <property type="entry name" value="Haem peroxidase domain superfamily, animal type"/>
    <property type="match status" value="1"/>
</dbReference>
<dbReference type="InterPro" id="IPR034815">
    <property type="entry name" value="A_dioxygenase"/>
</dbReference>
<dbReference type="InterPro" id="IPR019791">
    <property type="entry name" value="Haem_peroxidase_animal"/>
</dbReference>
<dbReference type="InterPro" id="IPR010255">
    <property type="entry name" value="Haem_peroxidase_sf"/>
</dbReference>
<dbReference type="InterPro" id="IPR037120">
    <property type="entry name" value="Haem_peroxidase_sf_animal"/>
</dbReference>
<dbReference type="InterPro" id="IPR050783">
    <property type="entry name" value="Oxylipin_biosynth_metab"/>
</dbReference>
<dbReference type="PANTHER" id="PTHR11903:SF11">
    <property type="entry name" value="ALPHA-DIOXYGENASE 1"/>
    <property type="match status" value="1"/>
</dbReference>
<dbReference type="PANTHER" id="PTHR11903">
    <property type="entry name" value="PROSTAGLANDIN G/H SYNTHASE"/>
    <property type="match status" value="1"/>
</dbReference>
<dbReference type="Pfam" id="PF03098">
    <property type="entry name" value="An_peroxidase"/>
    <property type="match status" value="1"/>
</dbReference>
<dbReference type="SUPFAM" id="SSF48113">
    <property type="entry name" value="Heme-dependent peroxidases"/>
    <property type="match status" value="1"/>
</dbReference>
<dbReference type="PROSITE" id="PS50292">
    <property type="entry name" value="PEROXIDASE_3"/>
    <property type="match status" value="1"/>
</dbReference>
<comment type="function">
    <text evidence="2 3 6">Alpha-dioxygenase that catalyzes the primary oxygenation step of a variety of 14-20 carbon fatty acids, containing up to three unsaturated bonds, into their corresponding 2R-hydroperoxides (PubMed:10455113, PubMed:12060227). Involved in the production of oxylipins that function in cell signaling, wound healing, and protection from infection (PubMed:10455113, PubMed:12060227). Mediates protection against oxidative stress and cell death, probably by generating some lipid-derived molecules (PubMed:12060227). Promotes local and systemic plant defense in a salicylic acid (SA)-dependent manner, including the establishment of systemic acquired resistance (SAR) in response to incompatible interaction (PubMed:22199234). Involved in a negative regulation of abscisic acid (ABA)-mediated signaling pathway (PubMed:22199234).</text>
</comment>
<comment type="catalytic activity">
    <reaction evidence="2">
        <text>a 1,2-saturated fatty acid + O2 = a (2R)-2-hydroperoxy fatty acid</text>
        <dbReference type="Rhea" id="RHEA:63508"/>
        <dbReference type="ChEBI" id="CHEBI:15379"/>
        <dbReference type="ChEBI" id="CHEBI:83955"/>
        <dbReference type="ChEBI" id="CHEBI:147340"/>
        <dbReference type="EC" id="1.13.11.92"/>
    </reaction>
    <physiologicalReaction direction="left-to-right" evidence="2">
        <dbReference type="Rhea" id="RHEA:63509"/>
    </physiologicalReaction>
</comment>
<comment type="catalytic activity">
    <reaction evidence="2">
        <text>(9Z,12Z,15Z)-octadecatrienoate + O2 = (R)-2-hydroperoxy-(9Z,12Z,15Z)-octadecatrienoate</text>
        <dbReference type="Rhea" id="RHEA:16329"/>
        <dbReference type="ChEBI" id="CHEBI:15379"/>
        <dbReference type="ChEBI" id="CHEBI:32387"/>
        <dbReference type="ChEBI" id="CHEBI:76161"/>
        <dbReference type="EC" id="1.13.11.92"/>
    </reaction>
    <physiologicalReaction direction="left-to-right" evidence="2">
        <dbReference type="Rhea" id="RHEA:16330"/>
    </physiologicalReaction>
</comment>
<comment type="catalytic activity">
    <reaction evidence="2">
        <text>hexadecanoate + O2 = (2R)-2-hydroperoxyhexadecanoate</text>
        <dbReference type="Rhea" id="RHEA:63836"/>
        <dbReference type="ChEBI" id="CHEBI:7896"/>
        <dbReference type="ChEBI" id="CHEBI:15379"/>
        <dbReference type="ChEBI" id="CHEBI:149616"/>
        <dbReference type="EC" id="1.13.11.92"/>
    </reaction>
    <physiologicalReaction direction="left-to-right" evidence="2">
        <dbReference type="Rhea" id="RHEA:63837"/>
    </physiologicalReaction>
</comment>
<comment type="catalytic activity">
    <reaction evidence="2">
        <text>(9Z,12Z)-octadecadienoate + O2 = (2R,9Z,12Z)-2-hydroperoxyoctadecadienoate</text>
        <dbReference type="Rhea" id="RHEA:63860"/>
        <dbReference type="ChEBI" id="CHEBI:15379"/>
        <dbReference type="ChEBI" id="CHEBI:30245"/>
        <dbReference type="ChEBI" id="CHEBI:149618"/>
        <dbReference type="EC" id="1.13.11.92"/>
    </reaction>
    <physiologicalReaction direction="left-to-right" evidence="2">
        <dbReference type="Rhea" id="RHEA:63861"/>
    </physiologicalReaction>
</comment>
<comment type="catalytic activity">
    <reaction evidence="2">
        <text>(9Z)-octadecenoate + O2 = (2R,9Z)-2-hydroperoxyoctadecenoate</text>
        <dbReference type="Rhea" id="RHEA:63868"/>
        <dbReference type="ChEBI" id="CHEBI:15379"/>
        <dbReference type="ChEBI" id="CHEBI:30823"/>
        <dbReference type="ChEBI" id="CHEBI:149623"/>
        <dbReference type="EC" id="1.13.11.92"/>
    </reaction>
    <physiologicalReaction direction="left-to-right" evidence="2">
        <dbReference type="Rhea" id="RHEA:63869"/>
    </physiologicalReaction>
</comment>
<comment type="cofactor">
    <cofactor evidence="4 7">
        <name>heme b</name>
        <dbReference type="ChEBI" id="CHEBI:60344"/>
    </cofactor>
    <text evidence="4 7">Binds 1 heme b (iron(II)-protoporphyrin IX) group per subunit.</text>
</comment>
<comment type="cofactor">
    <cofactor evidence="7">
        <name>Ca(2+)</name>
        <dbReference type="ChEBI" id="CHEBI:29108"/>
    </cofactor>
    <text evidence="7">Binds 1 calcium ion per subunit.</text>
</comment>
<comment type="biophysicochemical properties">
    <kinetics>
        <KM evidence="2">18 uM for linolenic acid (at pH 8 and 30 degrees Celsius)</KM>
        <KM evidence="2">17 uM for linoleic acid (at pH 8 and 30 degrees Celsius)</KM>
        <KM evidence="2">13 uM for oleic acid (at pH 8 and 30 degrees Celsius)</KM>
        <KM evidence="4">14 uM for oleic acid (at pH 7.8 and 30 degrees Celsius)</KM>
        <KM evidence="2">11 uM for palmitic acid (at pH 8 and 30 degrees Celsius)</KM>
        <Vmax evidence="2">119.0 nmol/min/mg enzyme with linolenic acid as substrate (at pH 8 and 30 degrees Celsius)</Vmax>
        <Vmax evidence="2">111.0 nmol/min/mg enzyme with linoleic acid as substrate (at pH 8 and 30 degrees Celsius)</Vmax>
        <Vmax evidence="2">91.0 nmol/min/mg enzyme with oleic acid as substrate (at pH 8 and 30 degrees Celsius)</Vmax>
        <Vmax evidence="2">46.0 nmol/min/mg enzyme with palmitic acid as substrate (at pH 8 and 30 degrees Celsius)</Vmax>
    </kinetics>
</comment>
<comment type="subunit">
    <text evidence="7">Forms monomers in solution.</text>
</comment>
<comment type="subcellular location">
    <subcellularLocation>
        <location evidence="8">Lipid droplet</location>
    </subcellularLocation>
    <text evidence="8">Localizes on the surface of leaf oil bodies.</text>
</comment>
<comment type="tissue specificity">
    <text evidence="3 5">Expressed in roots (epiderm), mature flowers (e.g. anthers) and senescing leaves.</text>
</comment>
<comment type="induction">
    <text evidence="3">Induced by salicylic acid (SA) and by some chemicals generating reactive oxygen species (ROS, e.g. nitric oxide (NO), intracellular superoxide and singlet oxygen) such as sodium nitropruside (SNP), paraquat and rose bengal (RB). Accumulates locally, at the infection site, in response to both incompatible and compatible bacterial pathogens (e.g. Pseudomonas syringae pv. tomato DC3000) in a SA-dependent manner, with a faster response during hypersensitive reactions.</text>
</comment>
<comment type="disruption phenotype">
    <text evidence="6">Slightly higher accumulation of Pseudomonas syringae pv. tomato DC3000 in infected leaves. Partially impaired systemic acquired resistance (SAR) in response to incompatible interaction. When associated with LOX1 disruption; hypersensitivity to the growth-inhibitory effect of abscisic acid (ABA) accompanied by an accumulation of ABA-inducible marker genes.</text>
</comment>
<comment type="similarity">
    <text evidence="1">Belongs to the peroxidase family.</text>
</comment>
<evidence type="ECO:0000255" key="1">
    <source>
        <dbReference type="PROSITE-ProRule" id="PRU00298"/>
    </source>
</evidence>
<evidence type="ECO:0000269" key="2">
    <source>
    </source>
</evidence>
<evidence type="ECO:0000269" key="3">
    <source>
    </source>
</evidence>
<evidence type="ECO:0000269" key="4">
    <source>
    </source>
</evidence>
<evidence type="ECO:0000269" key="5">
    <source>
    </source>
</evidence>
<evidence type="ECO:0000269" key="6">
    <source>
    </source>
</evidence>
<evidence type="ECO:0000269" key="7">
    <source>
    </source>
</evidence>
<evidence type="ECO:0000269" key="8">
    <source>
    </source>
</evidence>
<evidence type="ECO:0000303" key="9">
    <source>
    </source>
</evidence>
<evidence type="ECO:0000303" key="10">
    <source>
    </source>
</evidence>
<evidence type="ECO:0000303" key="11">
    <source>
    </source>
</evidence>
<evidence type="ECO:0000305" key="12"/>
<evidence type="ECO:0000312" key="13">
    <source>
        <dbReference type="Araport" id="AT3G01420"/>
    </source>
</evidence>
<evidence type="ECO:0000312" key="14">
    <source>
        <dbReference type="EMBL" id="AAF24612.1"/>
    </source>
</evidence>
<evidence type="ECO:0007829" key="15">
    <source>
        <dbReference type="PDB" id="4HHR"/>
    </source>
</evidence>
<organism>
    <name type="scientific">Arabidopsis thaliana</name>
    <name type="common">Mouse-ear cress</name>
    <dbReference type="NCBI Taxonomy" id="3702"/>
    <lineage>
        <taxon>Eukaryota</taxon>
        <taxon>Viridiplantae</taxon>
        <taxon>Streptophyta</taxon>
        <taxon>Embryophyta</taxon>
        <taxon>Tracheophyta</taxon>
        <taxon>Spermatophyta</taxon>
        <taxon>Magnoliopsida</taxon>
        <taxon>eudicotyledons</taxon>
        <taxon>Gunneridae</taxon>
        <taxon>Pentapetalae</taxon>
        <taxon>rosids</taxon>
        <taxon>malvids</taxon>
        <taxon>Brassicales</taxon>
        <taxon>Brassicaceae</taxon>
        <taxon>Camelineae</taxon>
        <taxon>Arabidopsis</taxon>
    </lineage>
</organism>
<gene>
    <name evidence="10" type="primary">DOX1</name>
    <name evidence="12" type="synonym">DIOX1</name>
    <name evidence="11" type="synonym">PADOX-1</name>
    <name evidence="9" type="synonym">PIOX</name>
    <name evidence="13" type="ordered locus">At3g01420</name>
    <name evidence="14" type="ORF">T13O15.6</name>
</gene>
<feature type="chain" id="PRO_0000420284" description="Alpha-dioxygenase 1">
    <location>
        <begin position="1"/>
        <end position="639"/>
    </location>
</feature>
<feature type="active site" description="Proton acceptor" evidence="1 7">
    <location>
        <position position="163"/>
    </location>
</feature>
<feature type="binding site" evidence="7">
    <location>
        <position position="164"/>
    </location>
    <ligand>
        <name>Ca(2+)</name>
        <dbReference type="ChEBI" id="CHEBI:29108"/>
    </ligand>
</feature>
<feature type="binding site" evidence="7">
    <location>
        <position position="168"/>
    </location>
    <ligand>
        <name>heme b</name>
        <dbReference type="ChEBI" id="CHEBI:60344"/>
    </ligand>
</feature>
<feature type="binding site" evidence="7">
    <location>
        <position position="216"/>
    </location>
    <ligand>
        <name>Ca(2+)</name>
        <dbReference type="ChEBI" id="CHEBI:29108"/>
    </ligand>
</feature>
<feature type="binding site" evidence="7">
    <location>
        <position position="218"/>
    </location>
    <ligand>
        <name>Ca(2+)</name>
        <dbReference type="ChEBI" id="CHEBI:29108"/>
    </ligand>
</feature>
<feature type="binding site" evidence="7">
    <location>
        <position position="220"/>
    </location>
    <ligand>
        <name>Ca(2+)</name>
        <dbReference type="ChEBI" id="CHEBI:29108"/>
    </ligand>
</feature>
<feature type="binding site" evidence="7">
    <location>
        <position position="222"/>
    </location>
    <ligand>
        <name>Ca(2+)</name>
        <dbReference type="ChEBI" id="CHEBI:29108"/>
    </ligand>
</feature>
<feature type="binding site" description="axial binding residue" evidence="1 7">
    <location>
        <position position="389"/>
    </location>
    <ligand>
        <name>heme b</name>
        <dbReference type="ChEBI" id="CHEBI:60344"/>
    </ligand>
    <ligandPart>
        <name>Fe</name>
        <dbReference type="ChEBI" id="CHEBI:18248"/>
    </ligandPart>
</feature>
<feature type="binding site" evidence="7">
    <location>
        <position position="486"/>
    </location>
    <ligand>
        <name>heme b</name>
        <dbReference type="ChEBI" id="CHEBI:60344"/>
    </ligand>
</feature>
<feature type="binding site" evidence="7">
    <location>
        <position position="490"/>
    </location>
    <ligand>
        <name>heme b</name>
        <dbReference type="ChEBI" id="CHEBI:60344"/>
    </ligand>
</feature>
<feature type="site" description="Transition state stabilizer" evidence="1">
    <location>
        <position position="266"/>
    </location>
</feature>
<feature type="mutagenesis site" description="Slightly reduces oxygenase activity." evidence="7">
    <original>Q</original>
    <variation>N</variation>
    <variation>S</variation>
    <variation>V</variation>
    <location>
        <position position="159"/>
    </location>
</feature>
<feature type="mutagenesis site" description="Reduces oxygenase activity 17-fold." evidence="4">
    <original>H</original>
    <variation>C</variation>
    <location>
        <position position="163"/>
    </location>
</feature>
<feature type="mutagenesis site" description="Reduces oxygenase activity 6-fold." evidence="4">
    <original>H</original>
    <variation>M</variation>
    <location>
        <position position="163"/>
    </location>
</feature>
<feature type="mutagenesis site" description="Reduces oxygenase activity more than 100-fold." evidence="4">
    <original>H</original>
    <variation>Q</variation>
    <location>
        <position position="163"/>
    </location>
</feature>
<feature type="mutagenesis site" description="Reduces oxygenase activity 8-fold." evidence="4">
    <original>H</original>
    <variation>Y</variation>
    <location>
        <position position="163"/>
    </location>
</feature>
<feature type="mutagenesis site" description="Reduces oxygenase activity 14-fold." evidence="7">
    <original>H</original>
    <variation>A</variation>
    <location>
        <position position="318"/>
    </location>
</feature>
<feature type="mutagenesis site" description="Reduces oxygenase activity 4-fold." evidence="7">
    <original>H</original>
    <variation>Q</variation>
    <location>
        <position position="318"/>
    </location>
</feature>
<feature type="mutagenesis site" description="Reduces oxygenase activity 14-fold." evidence="7">
    <original>T</original>
    <variation>A</variation>
    <location>
        <position position="323"/>
    </location>
</feature>
<feature type="mutagenesis site" description="Abolishes oxygenase activity." evidence="7">
    <original>T</original>
    <variation>L</variation>
    <location>
        <position position="323"/>
    </location>
</feature>
<feature type="mutagenesis site" description="Abolishes oxygenase activity." evidence="7">
    <original>Y</original>
    <variation>F</variation>
    <location>
        <position position="386"/>
    </location>
</feature>
<feature type="mutagenesis site" description="Reduces oxygenase activity more than 100-fold." evidence="4">
    <original>Y</original>
    <variation>F</variation>
    <location>
        <position position="386"/>
    </location>
</feature>
<feature type="mutagenesis site" description="No effect on oxygenase activity." evidence="4">
    <original>R</original>
    <variation>H</variation>
    <location>
        <position position="387"/>
    </location>
</feature>
<feature type="mutagenesis site" description="Reduces oxygenase activity 13-fold." evidence="4">
    <original>H</original>
    <variation>C</variation>
    <variation>M</variation>
    <location>
        <position position="389"/>
    </location>
</feature>
<feature type="mutagenesis site" description="Slightly reduces oxygenase activity." evidence="7">
    <original>R</original>
    <variation>A</variation>
    <location>
        <position position="565"/>
    </location>
</feature>
<feature type="mutagenesis site" description="Reduces oxygenase activity 3-fold." evidence="7">
    <original>R</original>
    <variation>K</variation>
    <location>
        <position position="565"/>
    </location>
</feature>
<feature type="mutagenesis site" description="Reduces oxygenase activity 2-fold." evidence="7">
    <original>R</original>
    <variation>L</variation>
    <location>
        <position position="565"/>
    </location>
</feature>
<feature type="mutagenesis site" description="Abolishes oxygenase activity." evidence="7">
    <original>R</original>
    <variation>A</variation>
    <variation>L</variation>
    <location>
        <position position="566"/>
    </location>
</feature>
<feature type="mutagenesis site" description="Reduces oxygenase activity 36-fold." evidence="7">
    <original>R</original>
    <variation>K</variation>
    <location>
        <position position="566"/>
    </location>
</feature>
<feature type="helix" evidence="15">
    <location>
        <begin position="1"/>
        <end position="12"/>
    </location>
</feature>
<feature type="helix" evidence="15">
    <location>
        <begin position="13"/>
        <end position="15"/>
    </location>
</feature>
<feature type="helix" evidence="15">
    <location>
        <begin position="18"/>
        <end position="20"/>
    </location>
</feature>
<feature type="helix" evidence="15">
    <location>
        <begin position="21"/>
        <end position="25"/>
    </location>
</feature>
<feature type="helix" evidence="15">
    <location>
        <begin position="29"/>
        <end position="43"/>
    </location>
</feature>
<feature type="helix" evidence="15">
    <location>
        <begin position="47"/>
        <end position="49"/>
    </location>
</feature>
<feature type="helix" evidence="15">
    <location>
        <begin position="52"/>
        <end position="69"/>
    </location>
</feature>
<feature type="helix" evidence="15">
    <location>
        <begin position="85"/>
        <end position="87"/>
    </location>
</feature>
<feature type="turn" evidence="15">
    <location>
        <begin position="103"/>
        <end position="106"/>
    </location>
</feature>
<feature type="strand" evidence="15">
    <location>
        <begin position="113"/>
        <end position="116"/>
    </location>
</feature>
<feature type="helix" evidence="15">
    <location>
        <begin position="122"/>
        <end position="124"/>
    </location>
</feature>
<feature type="helix" evidence="15">
    <location>
        <begin position="130"/>
        <end position="137"/>
    </location>
</feature>
<feature type="strand" evidence="15">
    <location>
        <begin position="149"/>
        <end position="151"/>
    </location>
</feature>
<feature type="helix" evidence="15">
    <location>
        <begin position="152"/>
        <end position="165"/>
    </location>
</feature>
<feature type="strand" evidence="15">
    <location>
        <begin position="170"/>
        <end position="178"/>
    </location>
</feature>
<feature type="turn" evidence="15">
    <location>
        <begin position="181"/>
        <end position="183"/>
    </location>
</feature>
<feature type="helix" evidence="15">
    <location>
        <begin position="184"/>
        <end position="186"/>
    </location>
</feature>
<feature type="strand" evidence="15">
    <location>
        <begin position="190"/>
        <end position="197"/>
    </location>
</feature>
<feature type="strand" evidence="15">
    <location>
        <begin position="205"/>
        <end position="207"/>
    </location>
</feature>
<feature type="strand" evidence="15">
    <location>
        <begin position="212"/>
        <end position="215"/>
    </location>
</feature>
<feature type="strand" evidence="15">
    <location>
        <begin position="217"/>
        <end position="220"/>
    </location>
</feature>
<feature type="helix" evidence="15">
    <location>
        <begin position="222"/>
        <end position="225"/>
    </location>
</feature>
<feature type="helix" evidence="15">
    <location>
        <begin position="229"/>
        <end position="235"/>
    </location>
</feature>
<feature type="turn" evidence="15">
    <location>
        <begin position="247"/>
        <end position="249"/>
    </location>
</feature>
<feature type="helix" evidence="15">
    <location>
        <begin position="270"/>
        <end position="293"/>
    </location>
</feature>
<feature type="helix" evidence="15">
    <location>
        <begin position="299"/>
        <end position="320"/>
    </location>
</feature>
<feature type="helix" evidence="15">
    <location>
        <begin position="322"/>
        <end position="326"/>
    </location>
</feature>
<feature type="helix" evidence="15">
    <location>
        <begin position="330"/>
        <end position="341"/>
    </location>
</feature>
<feature type="helix" evidence="15">
    <location>
        <begin position="346"/>
        <end position="352"/>
    </location>
</feature>
<feature type="helix" evidence="15">
    <location>
        <begin position="358"/>
        <end position="361"/>
    </location>
</feature>
<feature type="helix" evidence="15">
    <location>
        <begin position="380"/>
        <end position="385"/>
    </location>
</feature>
<feature type="helix" evidence="15">
    <location>
        <begin position="389"/>
        <end position="391"/>
    </location>
</feature>
<feature type="strand" evidence="15">
    <location>
        <begin position="394"/>
        <end position="399"/>
    </location>
</feature>
<feature type="helix" evidence="15">
    <location>
        <begin position="407"/>
        <end position="409"/>
    </location>
</feature>
<feature type="strand" evidence="15">
    <location>
        <begin position="413"/>
        <end position="418"/>
    </location>
</feature>
<feature type="helix" evidence="15">
    <location>
        <begin position="419"/>
        <end position="422"/>
    </location>
</feature>
<feature type="helix" evidence="15">
    <location>
        <begin position="424"/>
        <end position="434"/>
    </location>
</feature>
<feature type="helix" evidence="15">
    <location>
        <begin position="436"/>
        <end position="444"/>
    </location>
</feature>
<feature type="helix" evidence="15">
    <location>
        <begin position="458"/>
        <end position="461"/>
    </location>
</feature>
<feature type="helix" evidence="15">
    <location>
        <begin position="479"/>
        <end position="489"/>
    </location>
</feature>
<feature type="helix" evidence="15">
    <location>
        <begin position="495"/>
        <end position="501"/>
    </location>
</feature>
<feature type="helix" evidence="15">
    <location>
        <begin position="510"/>
        <end position="512"/>
    </location>
</feature>
<feature type="helix" evidence="15">
    <location>
        <begin position="517"/>
        <end position="526"/>
    </location>
</feature>
<feature type="turn" evidence="15">
    <location>
        <begin position="527"/>
        <end position="529"/>
    </location>
</feature>
<feature type="turn" evidence="15">
    <location>
        <begin position="531"/>
        <end position="533"/>
    </location>
</feature>
<feature type="helix" evidence="15">
    <location>
        <begin position="536"/>
        <end position="542"/>
    </location>
</feature>
<feature type="strand" evidence="15">
    <location>
        <begin position="549"/>
        <end position="551"/>
    </location>
</feature>
<feature type="helix" evidence="15">
    <location>
        <begin position="553"/>
        <end position="568"/>
    </location>
</feature>
<feature type="helix" evidence="15">
    <location>
        <begin position="571"/>
        <end position="573"/>
    </location>
</feature>
<feature type="turn" evidence="15">
    <location>
        <begin position="574"/>
        <end position="576"/>
    </location>
</feature>
<feature type="helix" evidence="15">
    <location>
        <begin position="579"/>
        <end position="582"/>
    </location>
</feature>
<feature type="helix" evidence="15">
    <location>
        <begin position="584"/>
        <end position="592"/>
    </location>
</feature>
<feature type="helix" evidence="15">
    <location>
        <begin position="596"/>
        <end position="603"/>
    </location>
</feature>
<feature type="helix" evidence="15">
    <location>
        <begin position="607"/>
        <end position="611"/>
    </location>
</feature>
<feature type="strand" evidence="15">
    <location>
        <begin position="614"/>
        <end position="616"/>
    </location>
</feature>
<feature type="helix" evidence="15">
    <location>
        <begin position="633"/>
        <end position="635"/>
    </location>
</feature>
<name>DOX1_ARATH</name>
<proteinExistence type="evidence at protein level"/>
<accession>Q9SGH6</accession>
<reference key="1">
    <citation type="journal article" date="2002" name="Plant J.">
        <title>Involvement of the Arabidopsis alpha-DOX1 fatty acid dioxygenase in protection against oxidative stress and cell death.</title>
        <authorList>
            <person name="De Leon I.P."/>
            <person name="Sanz A."/>
            <person name="Hamberg M."/>
            <person name="Castresana C."/>
        </authorList>
    </citation>
    <scope>NUCLEOTIDE SEQUENCE [GENOMIC DNA]</scope>
    <scope>FUNCTION</scope>
    <scope>INDUCTION BY PATHOGENS</scope>
    <scope>TISSUE SPECIFICITY</scope>
    <source>
        <strain>cv. Columbia</strain>
    </source>
</reference>
<reference key="2">
    <citation type="journal article" date="2000" name="Nature">
        <title>Sequence and analysis of chromosome 3 of the plant Arabidopsis thaliana.</title>
        <authorList>
            <person name="Salanoubat M."/>
            <person name="Lemcke K."/>
            <person name="Rieger M."/>
            <person name="Ansorge W."/>
            <person name="Unseld M."/>
            <person name="Fartmann B."/>
            <person name="Valle G."/>
            <person name="Bloecker H."/>
            <person name="Perez-Alonso M."/>
            <person name="Obermaier B."/>
            <person name="Delseny M."/>
            <person name="Boutry M."/>
            <person name="Grivell L.A."/>
            <person name="Mache R."/>
            <person name="Puigdomenech P."/>
            <person name="De Simone V."/>
            <person name="Choisne N."/>
            <person name="Artiguenave F."/>
            <person name="Robert C."/>
            <person name="Brottier P."/>
            <person name="Wincker P."/>
            <person name="Cattolico L."/>
            <person name="Weissenbach J."/>
            <person name="Saurin W."/>
            <person name="Quetier F."/>
            <person name="Schaefer M."/>
            <person name="Mueller-Auer S."/>
            <person name="Gabel C."/>
            <person name="Fuchs M."/>
            <person name="Benes V."/>
            <person name="Wurmbach E."/>
            <person name="Drzonek H."/>
            <person name="Erfle H."/>
            <person name="Jordan N."/>
            <person name="Bangert S."/>
            <person name="Wiedelmann R."/>
            <person name="Kranz H."/>
            <person name="Voss H."/>
            <person name="Holland R."/>
            <person name="Brandt P."/>
            <person name="Nyakatura G."/>
            <person name="Vezzi A."/>
            <person name="D'Angelo M."/>
            <person name="Pallavicini A."/>
            <person name="Toppo S."/>
            <person name="Simionati B."/>
            <person name="Conrad A."/>
            <person name="Hornischer K."/>
            <person name="Kauer G."/>
            <person name="Loehnert T.-H."/>
            <person name="Nordsiek G."/>
            <person name="Reichelt J."/>
            <person name="Scharfe M."/>
            <person name="Schoen O."/>
            <person name="Bargues M."/>
            <person name="Terol J."/>
            <person name="Climent J."/>
            <person name="Navarro P."/>
            <person name="Collado C."/>
            <person name="Perez-Perez A."/>
            <person name="Ottenwaelder B."/>
            <person name="Duchemin D."/>
            <person name="Cooke R."/>
            <person name="Laudie M."/>
            <person name="Berger-Llauro C."/>
            <person name="Purnelle B."/>
            <person name="Masuy D."/>
            <person name="de Haan M."/>
            <person name="Maarse A.C."/>
            <person name="Alcaraz J.-P."/>
            <person name="Cottet A."/>
            <person name="Casacuberta E."/>
            <person name="Monfort A."/>
            <person name="Argiriou A."/>
            <person name="Flores M."/>
            <person name="Liguori R."/>
            <person name="Vitale D."/>
            <person name="Mannhaupt G."/>
            <person name="Haase D."/>
            <person name="Schoof H."/>
            <person name="Rudd S."/>
            <person name="Zaccaria P."/>
            <person name="Mewes H.-W."/>
            <person name="Mayer K.F.X."/>
            <person name="Kaul S."/>
            <person name="Town C.D."/>
            <person name="Koo H.L."/>
            <person name="Tallon L.J."/>
            <person name="Jenkins J."/>
            <person name="Rooney T."/>
            <person name="Rizzo M."/>
            <person name="Walts A."/>
            <person name="Utterback T."/>
            <person name="Fujii C.Y."/>
            <person name="Shea T.P."/>
            <person name="Creasy T.H."/>
            <person name="Haas B."/>
            <person name="Maiti R."/>
            <person name="Wu D."/>
            <person name="Peterson J."/>
            <person name="Van Aken S."/>
            <person name="Pai G."/>
            <person name="Militscher J."/>
            <person name="Sellers P."/>
            <person name="Gill J.E."/>
            <person name="Feldblyum T.V."/>
            <person name="Preuss D."/>
            <person name="Lin X."/>
            <person name="Nierman W.C."/>
            <person name="Salzberg S.L."/>
            <person name="White O."/>
            <person name="Venter J.C."/>
            <person name="Fraser C.M."/>
            <person name="Kaneko T."/>
            <person name="Nakamura Y."/>
            <person name="Sato S."/>
            <person name="Kato T."/>
            <person name="Asamizu E."/>
            <person name="Sasamoto S."/>
            <person name="Kimura T."/>
            <person name="Idesawa K."/>
            <person name="Kawashima K."/>
            <person name="Kishida Y."/>
            <person name="Kiyokawa C."/>
            <person name="Kohara M."/>
            <person name="Matsumoto M."/>
            <person name="Matsuno A."/>
            <person name="Muraki A."/>
            <person name="Nakayama S."/>
            <person name="Nakazaki N."/>
            <person name="Shinpo S."/>
            <person name="Takeuchi C."/>
            <person name="Wada T."/>
            <person name="Watanabe A."/>
            <person name="Yamada M."/>
            <person name="Yasuda M."/>
            <person name="Tabata S."/>
        </authorList>
    </citation>
    <scope>NUCLEOTIDE SEQUENCE [LARGE SCALE GENOMIC DNA]</scope>
    <source>
        <strain>cv. Columbia</strain>
    </source>
</reference>
<reference key="3">
    <citation type="journal article" date="2017" name="Plant J.">
        <title>Araport11: a complete reannotation of the Arabidopsis thaliana reference genome.</title>
        <authorList>
            <person name="Cheng C.Y."/>
            <person name="Krishnakumar V."/>
            <person name="Chan A.P."/>
            <person name="Thibaud-Nissen F."/>
            <person name="Schobel S."/>
            <person name="Town C.D."/>
        </authorList>
    </citation>
    <scope>GENOME REANNOTATION</scope>
    <source>
        <strain>cv. Columbia</strain>
    </source>
</reference>
<reference key="4">
    <citation type="journal article" date="2003" name="Science">
        <title>Empirical analysis of transcriptional activity in the Arabidopsis genome.</title>
        <authorList>
            <person name="Yamada K."/>
            <person name="Lim J."/>
            <person name="Dale J.M."/>
            <person name="Chen H."/>
            <person name="Shinn P."/>
            <person name="Palm C.J."/>
            <person name="Southwick A.M."/>
            <person name="Wu H.C."/>
            <person name="Kim C.J."/>
            <person name="Nguyen M."/>
            <person name="Pham P.K."/>
            <person name="Cheuk R.F."/>
            <person name="Karlin-Newmann G."/>
            <person name="Liu S.X."/>
            <person name="Lam B."/>
            <person name="Sakano H."/>
            <person name="Wu T."/>
            <person name="Yu G."/>
            <person name="Miranda M."/>
            <person name="Quach H.L."/>
            <person name="Tripp M."/>
            <person name="Chang C.H."/>
            <person name="Lee J.M."/>
            <person name="Toriumi M.J."/>
            <person name="Chan M.M."/>
            <person name="Tang C.C."/>
            <person name="Onodera C.S."/>
            <person name="Deng J.M."/>
            <person name="Akiyama K."/>
            <person name="Ansari Y."/>
            <person name="Arakawa T."/>
            <person name="Banh J."/>
            <person name="Banno F."/>
            <person name="Bowser L."/>
            <person name="Brooks S.Y."/>
            <person name="Carninci P."/>
            <person name="Chao Q."/>
            <person name="Choy N."/>
            <person name="Enju A."/>
            <person name="Goldsmith A.D."/>
            <person name="Gurjal M."/>
            <person name="Hansen N.F."/>
            <person name="Hayashizaki Y."/>
            <person name="Johnson-Hopson C."/>
            <person name="Hsuan V.W."/>
            <person name="Iida K."/>
            <person name="Karnes M."/>
            <person name="Khan S."/>
            <person name="Koesema E."/>
            <person name="Ishida J."/>
            <person name="Jiang P.X."/>
            <person name="Jones T."/>
            <person name="Kawai J."/>
            <person name="Kamiya A."/>
            <person name="Meyers C."/>
            <person name="Nakajima M."/>
            <person name="Narusaka M."/>
            <person name="Seki M."/>
            <person name="Sakurai T."/>
            <person name="Satou M."/>
            <person name="Tamse R."/>
            <person name="Vaysberg M."/>
            <person name="Wallender E.K."/>
            <person name="Wong C."/>
            <person name="Yamamura Y."/>
            <person name="Yuan S."/>
            <person name="Shinozaki K."/>
            <person name="Davis R.W."/>
            <person name="Theologis A."/>
            <person name="Ecker J.R."/>
        </authorList>
    </citation>
    <scope>NUCLEOTIDE SEQUENCE [LARGE SCALE MRNA]</scope>
    <source>
        <strain>cv. Columbia</strain>
    </source>
</reference>
<reference key="5">
    <citation type="journal article" date="1999" name="J. Biol. Chem.">
        <title>alpha-oxidation of fatty acids in higher plants. Identification of a pathogen-inducible oxygenase (piox) as an alpha-dioxygenase and biosynthesis of 2-hydroperoxylinolenic acid.</title>
        <authorList>
            <person name="Hamberg M."/>
            <person name="Sanz A."/>
            <person name="Castresana C."/>
        </authorList>
    </citation>
    <scope>FUNCTION</scope>
    <scope>CATALYTIC ACTIVITY</scope>
    <scope>BIOPHYSICOCHEMICAL PROPERTIES</scope>
</reference>
<reference key="6">
    <citation type="journal article" date="2004" name="J. Biol. Chem.">
        <title>Characterization of the heme environment in Arabidopsis thaliana fatty acid alpha-dioxygenase-1.</title>
        <authorList>
            <person name="Liu W."/>
            <person name="Rogge C.E."/>
            <person name="Bambai B."/>
            <person name="Palmer G."/>
            <person name="Tsai A.L."/>
            <person name="Kulmacz R.J."/>
        </authorList>
    </citation>
    <scope>BIOPHYSICOCHEMICAL PROPERTIES</scope>
    <scope>COFACTOR</scope>
    <scope>MUTAGENESIS OF HIS-163; TYR-386; ARG-387 AND HIS-389</scope>
</reference>
<reference key="7">
    <citation type="journal article" date="2007" name="Plant Cell">
        <title>Oxylipins produced by the 9-lipoxygenase pathway in Arabidopsis regulate lateral root development and defense responses through a specific signaling cascade.</title>
        <authorList>
            <person name="Vellosillo T."/>
            <person name="Martinez M."/>
            <person name="Lopez M.A."/>
            <person name="Vicente J."/>
            <person name="Cascon T."/>
            <person name="Dolan L."/>
            <person name="Hamberg M."/>
            <person name="Castresana C."/>
        </authorList>
    </citation>
    <scope>TISSUE SPECIFICITY</scope>
</reference>
<reference key="8">
    <citation type="journal article" date="2012" name="Mol. Plant">
        <title>Role of 9-lipoxygenase and alpha-dioxygenase oxylipin pathways as modulators of local and systemic defense.</title>
        <authorList>
            <person name="Vicente J."/>
            <person name="Cascon T."/>
            <person name="Vicedo B."/>
            <person name="Garcia-Agustin P."/>
            <person name="Hamberg M."/>
            <person name="Castresana C."/>
        </authorList>
    </citation>
    <scope>FUNCTION</scope>
    <scope>DISRUPTION PHENOTYPE</scope>
</reference>
<reference key="9">
    <citation type="journal article" date="2014" name="Plant Physiol.">
        <title>Leaf oil body functions as a subcellular factory for the production of a phytoalexin in Arabidopsis.</title>
        <authorList>
            <person name="Shimada T.L."/>
            <person name="Takano Y."/>
            <person name="Shimada T."/>
            <person name="Fujiwara M."/>
            <person name="Fukao Y."/>
            <person name="Mori M."/>
            <person name="Okazaki Y."/>
            <person name="Saito K."/>
            <person name="Sasaki R."/>
            <person name="Aoki K."/>
            <person name="Hara-Nishimura I."/>
        </authorList>
    </citation>
    <scope>SUBCELLULAR LOCATION</scope>
</reference>
<reference key="10">
    <citation type="journal article" date="2013" name="Biochemistry">
        <title>The crystal structure of alpha-dioxygenase provides insight into diversity in the cyclooxygenase-peroxidase superfamily.</title>
        <authorList>
            <person name="Goulah C.C."/>
            <person name="Zhu G."/>
            <person name="Koszelak-Rosenblum M."/>
            <person name="Malkowski M.G."/>
        </authorList>
    </citation>
    <scope>X-RAY CRYSTALLOGRAPHY (1.51 ANGSTROMS) IN COMPLEX WITH HEME AND CALCIUM ION</scope>
    <scope>ACTIVE SITE</scope>
    <scope>COFACTOR</scope>
    <scope>BIOPHYSICOCHEMICAL PROPERTIES</scope>
    <scope>SUBUNIT</scope>
    <scope>MUTAGENESIS OF GLN-159; HIS-318; THR-323; TYR-386; ARG-565 AND ARG-566</scope>
</reference>
<protein>
    <recommendedName>
        <fullName evidence="10">Alpha-dioxygenase 1</fullName>
        <shortName evidence="10">Alpha DOX1</shortName>
        <ecNumber evidence="2">1.13.11.92</ecNumber>
    </recommendedName>
    <alternativeName>
        <fullName evidence="12">Fatty acid dioxygenase AlphaDOX1</fullName>
    </alternativeName>
    <alternativeName>
        <fullName evidence="9">Pathogen-induced oxygenase</fullName>
    </alternativeName>
    <alternativeName>
        <fullName evidence="11">Plant alpha dioxygenase 1</fullName>
    </alternativeName>
</protein>
<keyword id="KW-0002">3D-structure</keyword>
<keyword id="KW-0223">Dioxygenase</keyword>
<keyword id="KW-0275">Fatty acid biosynthesis</keyword>
<keyword id="KW-0276">Fatty acid metabolism</keyword>
<keyword id="KW-0349">Heme</keyword>
<keyword id="KW-0381">Hypersensitive response</keyword>
<keyword id="KW-0408">Iron</keyword>
<keyword id="KW-0444">Lipid biosynthesis</keyword>
<keyword id="KW-0551">Lipid droplet</keyword>
<keyword id="KW-0443">Lipid metabolism</keyword>
<keyword id="KW-0479">Metal-binding</keyword>
<keyword id="KW-0560">Oxidoreductase</keyword>
<keyword id="KW-0925">Oxylipin biosynthesis</keyword>
<keyword id="KW-0575">Peroxidase</keyword>
<keyword id="KW-0611">Plant defense</keyword>
<keyword id="KW-1185">Reference proteome</keyword>
<sequence length="639" mass="73158">MKVITSLISSILLKFIHKDFHEIYARMSLLDRFLLLIVHGVDKMVPWHKLPVFLGLTYLEVRRHLHQQYNLLNVGQTPTGIRFDPANYPYRTADGKFNDPFNEGVGSQNSFFGRNCPPVDQKSKLRRPDPMVVATKLLGRKKFIDTGKQFNMIAASWIQFMIHDWIDHLEDTHQIELVAPKEVASKCPLSSFRFLKTKEVPTGFFEIKTGSQNIRTPWWDSSVIYGSNSKTLDRVRTYKDGKLKISEETGLLLHDEDGLAISGDIRNSWAGVSALQALFIKEHNAVCDALKDEDDDLEDEDLYRYARLVTSAVVAKIHTIDWTVQLLKTDTLLAGMRANWYGLLGKKFKDSFGHAGSSILGGVVGMKKPQNHGVPYSLTEDFTSVYRMHSLLPDQLHILDIDDVPGTNKSLPLIQEISMRDLIGRKGEETMSHIGFTKLMVSMGHQASGALELMNYPMWLRDIVPHDPNGQARPDHVDLAALEIYRDRERSVPRYNEFRRSMFMIPITKWEDLTEDEEAIEVLDDVYDGDVEELDLLVGLMAEKKIKGFAISETAFYIFLIMATRRLEADRFFTSDFNETIYTKKGLEWVNTTESLKDVIDRHYPDMTDKWMNSESAFSVWDSPPLTKNPIPLYLRIPS</sequence>